<sequence>MRLFNWRRQAVLNAMPLVKPDQVRTPWHEFWRRFRRQHMAMTAALFVILLIVVAIFARWIAPYDAENYFDYDNLNNGPSLQHWFGVDSLGRDIFSRVLVGAQISLAAGVFAVFIGAAIGTLLGLLAGYYEGWWDRLSMRICDVLFAFPGILLAIAVVAVLGSGIANVIIAVAIFSIPAFARLVRGNTLVLKQQTFIESARSIGASDMTILLRHILPGTVSSIVVFFTMRIGTSIISAASLSFLGLGAQPPTPEWGAMLNEARADMVIAPHVAVFPALAIFLTVLAFNLLGDGLRDALDPKIKG</sequence>
<organism>
    <name type="scientific">Escherichia coli (strain UTI89 / UPEC)</name>
    <dbReference type="NCBI Taxonomy" id="364106"/>
    <lineage>
        <taxon>Bacteria</taxon>
        <taxon>Pseudomonadati</taxon>
        <taxon>Pseudomonadota</taxon>
        <taxon>Gammaproteobacteria</taxon>
        <taxon>Enterobacterales</taxon>
        <taxon>Enterobacteriaceae</taxon>
        <taxon>Escherichia</taxon>
    </lineage>
</organism>
<comment type="function">
    <text evidence="1">Part of the ABC transporter complex GsiABCD involved in glutathione import. Probably responsible for the translocation of the substrate across the membrane.</text>
</comment>
<comment type="subunit">
    <text evidence="1">The complex is composed of two ATP-binding proteins (GsiA), two transmembrane proteins (GsiC and GsiD) and a solute-binding protein (GsiB).</text>
</comment>
<comment type="subcellular location">
    <subcellularLocation>
        <location evidence="1">Cell inner membrane</location>
        <topology evidence="2">Multi-pass membrane protein</topology>
    </subcellularLocation>
</comment>
<comment type="similarity">
    <text evidence="4">Belongs to the binding-protein-dependent transport system permease family.</text>
</comment>
<keyword id="KW-0997">Cell inner membrane</keyword>
<keyword id="KW-1003">Cell membrane</keyword>
<keyword id="KW-0472">Membrane</keyword>
<keyword id="KW-0812">Transmembrane</keyword>
<keyword id="KW-1133">Transmembrane helix</keyword>
<keyword id="KW-0813">Transport</keyword>
<reference key="1">
    <citation type="journal article" date="2006" name="Proc. Natl. Acad. Sci. U.S.A.">
        <title>Identification of genes subject to positive selection in uropathogenic strains of Escherichia coli: a comparative genomics approach.</title>
        <authorList>
            <person name="Chen S.L."/>
            <person name="Hung C.-S."/>
            <person name="Xu J."/>
            <person name="Reigstad C.S."/>
            <person name="Magrini V."/>
            <person name="Sabo A."/>
            <person name="Blasiar D."/>
            <person name="Bieri T."/>
            <person name="Meyer R.R."/>
            <person name="Ozersky P."/>
            <person name="Armstrong J.R."/>
            <person name="Fulton R.S."/>
            <person name="Latreille J.P."/>
            <person name="Spieth J."/>
            <person name="Hooton T.M."/>
            <person name="Mardis E.R."/>
            <person name="Hultgren S.J."/>
            <person name="Gordon J.I."/>
        </authorList>
    </citation>
    <scope>NUCLEOTIDE SEQUENCE [LARGE SCALE GENOMIC DNA]</scope>
    <source>
        <strain>UTI89 / UPEC</strain>
    </source>
</reference>
<proteinExistence type="inferred from homology"/>
<accession>Q1RE93</accession>
<protein>
    <recommendedName>
        <fullName evidence="1">Glutathione transport system permease protein GsiD</fullName>
    </recommendedName>
</protein>
<evidence type="ECO:0000250" key="1">
    <source>
        <dbReference type="UniProtKB" id="P75799"/>
    </source>
</evidence>
<evidence type="ECO:0000255" key="2"/>
<evidence type="ECO:0000255" key="3">
    <source>
        <dbReference type="PROSITE-ProRule" id="PRU00441"/>
    </source>
</evidence>
<evidence type="ECO:0000305" key="4"/>
<gene>
    <name evidence="1" type="primary">gsiD</name>
    <name type="ordered locus">UTI89_C0835</name>
</gene>
<feature type="chain" id="PRO_0000280006" description="Glutathione transport system permease protein GsiD">
    <location>
        <begin position="1"/>
        <end position="303"/>
    </location>
</feature>
<feature type="transmembrane region" description="Helical" evidence="3">
    <location>
        <begin position="40"/>
        <end position="60"/>
    </location>
</feature>
<feature type="transmembrane region" description="Helical" evidence="3">
    <location>
        <begin position="105"/>
        <end position="125"/>
    </location>
</feature>
<feature type="transmembrane region" description="Helical" evidence="3">
    <location>
        <begin position="144"/>
        <end position="164"/>
    </location>
</feature>
<feature type="transmembrane region" description="Helical" evidence="3">
    <location>
        <begin position="165"/>
        <end position="185"/>
    </location>
</feature>
<feature type="transmembrane region" description="Helical" evidence="3">
    <location>
        <begin position="222"/>
        <end position="242"/>
    </location>
</feature>
<feature type="transmembrane region" description="Helical" evidence="3">
    <location>
        <begin position="266"/>
        <end position="286"/>
    </location>
</feature>
<feature type="domain" description="ABC transmembrane type-1" evidence="3">
    <location>
        <begin position="101"/>
        <end position="290"/>
    </location>
</feature>
<dbReference type="EMBL" id="CP000243">
    <property type="protein sequence ID" value="ABE06321.1"/>
    <property type="molecule type" value="Genomic_DNA"/>
</dbReference>
<dbReference type="RefSeq" id="WP_001236052.1">
    <property type="nucleotide sequence ID" value="NZ_CP064825.1"/>
</dbReference>
<dbReference type="SMR" id="Q1RE93"/>
<dbReference type="KEGG" id="eci:UTI89_C0835"/>
<dbReference type="HOGENOM" id="CLU_028518_1_1_6"/>
<dbReference type="Proteomes" id="UP000001952">
    <property type="component" value="Chromosome"/>
</dbReference>
<dbReference type="GO" id="GO:0005886">
    <property type="term" value="C:plasma membrane"/>
    <property type="evidence" value="ECO:0007669"/>
    <property type="project" value="UniProtKB-SubCell"/>
</dbReference>
<dbReference type="GO" id="GO:0071916">
    <property type="term" value="F:dipeptide transmembrane transporter activity"/>
    <property type="evidence" value="ECO:0007669"/>
    <property type="project" value="TreeGrafter"/>
</dbReference>
<dbReference type="CDD" id="cd06261">
    <property type="entry name" value="TM_PBP2"/>
    <property type="match status" value="1"/>
</dbReference>
<dbReference type="FunFam" id="1.10.3720.10:FF:000022">
    <property type="entry name" value="Glutathione ABC transporter permease GsiD"/>
    <property type="match status" value="1"/>
</dbReference>
<dbReference type="Gene3D" id="1.10.3720.10">
    <property type="entry name" value="MetI-like"/>
    <property type="match status" value="1"/>
</dbReference>
<dbReference type="InterPro" id="IPR050366">
    <property type="entry name" value="BP-dependent_transpt_permease"/>
</dbReference>
<dbReference type="InterPro" id="IPR000515">
    <property type="entry name" value="MetI-like"/>
</dbReference>
<dbReference type="InterPro" id="IPR035906">
    <property type="entry name" value="MetI-like_sf"/>
</dbReference>
<dbReference type="InterPro" id="IPR025966">
    <property type="entry name" value="OppC_N"/>
</dbReference>
<dbReference type="NCBIfam" id="NF011662">
    <property type="entry name" value="PRK15082.1"/>
    <property type="match status" value="1"/>
</dbReference>
<dbReference type="PANTHER" id="PTHR43386:SF3">
    <property type="entry name" value="GLUTATHIONE TRANSPORT SYSTEM PERMEASE PROTEIN GSID"/>
    <property type="match status" value="1"/>
</dbReference>
<dbReference type="PANTHER" id="PTHR43386">
    <property type="entry name" value="OLIGOPEPTIDE TRANSPORT SYSTEM PERMEASE PROTEIN APPC"/>
    <property type="match status" value="1"/>
</dbReference>
<dbReference type="Pfam" id="PF00528">
    <property type="entry name" value="BPD_transp_1"/>
    <property type="match status" value="1"/>
</dbReference>
<dbReference type="Pfam" id="PF12911">
    <property type="entry name" value="OppC_N"/>
    <property type="match status" value="1"/>
</dbReference>
<dbReference type="SUPFAM" id="SSF161098">
    <property type="entry name" value="MetI-like"/>
    <property type="match status" value="1"/>
</dbReference>
<dbReference type="PROSITE" id="PS50928">
    <property type="entry name" value="ABC_TM1"/>
    <property type="match status" value="1"/>
</dbReference>
<name>GSID_ECOUT</name>